<sequence length="440" mass="48380">MIKDATAITLNPISYIEGEVRLPGSKSLSNRALLLSALAKGKTTLTNLLDSDDVRHMLNALKELGVTYQLSEDKSVCEIEGLGRAFEWQSGLALFLGNAGTAMRPLTAALCLSTPNKEGKNEIVLTGEPRMKERPIQHLVDALCQAGAEIQYLEQEGYPPIAIRNTGLKGGRIQIDGSVSSQFLTALLMAAPMAEADTEIEIIGELVSKPYIDITLKMMQTFGVEVENQAYQRFLVKGHQQYQSPHRFLVEGDASSASYFLAAAAIKGKVKVTGVGKNSIQGDRLFADVLEKMGAHITWGDDFIQVEKGNLKGIDMDMNHIPDAAMTIATTALFAEGETVIRNIYNWRVKETDRLTAMATELRKVGAEVEEGEDFIRIQPLNLAQFQHAEIETYNDHRMAMCFALIALSQTSVTILDPSCTAKTFPTFFDTFLRLTHAES</sequence>
<comment type="function">
    <text evidence="1">Catalyzes the transfer of the enolpyruvyl moiety of phosphoenolpyruvate (PEP) to the 5-hydroxyl of shikimate-3-phosphate (S3P) to produce enolpyruvyl shikimate-3-phosphate and inorganic phosphate.</text>
</comment>
<comment type="catalytic activity">
    <reaction evidence="1">
        <text>3-phosphoshikimate + phosphoenolpyruvate = 5-O-(1-carboxyvinyl)-3-phosphoshikimate + phosphate</text>
        <dbReference type="Rhea" id="RHEA:21256"/>
        <dbReference type="ChEBI" id="CHEBI:43474"/>
        <dbReference type="ChEBI" id="CHEBI:57701"/>
        <dbReference type="ChEBI" id="CHEBI:58702"/>
        <dbReference type="ChEBI" id="CHEBI:145989"/>
        <dbReference type="EC" id="2.5.1.19"/>
    </reaction>
    <physiologicalReaction direction="left-to-right" evidence="1">
        <dbReference type="Rhea" id="RHEA:21257"/>
    </physiologicalReaction>
</comment>
<comment type="pathway">
    <text evidence="1">Metabolic intermediate biosynthesis; chorismate biosynthesis; chorismate from D-erythrose 4-phosphate and phosphoenolpyruvate: step 6/7.</text>
</comment>
<comment type="subunit">
    <text evidence="1">Monomer.</text>
</comment>
<comment type="subcellular location">
    <subcellularLocation>
        <location evidence="1">Cytoplasm</location>
    </subcellularLocation>
</comment>
<comment type="similarity">
    <text evidence="1 2">Belongs to the EPSP synthase family.</text>
</comment>
<name>AROA_PASMU</name>
<keyword id="KW-0028">Amino-acid biosynthesis</keyword>
<keyword id="KW-0057">Aromatic amino acid biosynthesis</keyword>
<keyword id="KW-0963">Cytoplasm</keyword>
<keyword id="KW-1185">Reference proteome</keyword>
<keyword id="KW-0808">Transferase</keyword>
<organism>
    <name type="scientific">Pasteurella multocida (strain Pm70)</name>
    <dbReference type="NCBI Taxonomy" id="272843"/>
    <lineage>
        <taxon>Bacteria</taxon>
        <taxon>Pseudomonadati</taxon>
        <taxon>Pseudomonadota</taxon>
        <taxon>Gammaproteobacteria</taxon>
        <taxon>Pasteurellales</taxon>
        <taxon>Pasteurellaceae</taxon>
        <taxon>Pasteurella</taxon>
    </lineage>
</organism>
<gene>
    <name evidence="1" type="primary">aroA</name>
    <name type="ordered locus">PM0839</name>
</gene>
<feature type="chain" id="PRO_0000088278" description="3-phosphoshikimate 1-carboxyvinyltransferase">
    <location>
        <begin position="1"/>
        <end position="440"/>
    </location>
</feature>
<feature type="active site" description="Proton acceptor" evidence="1">
    <location>
        <position position="323"/>
    </location>
</feature>
<feature type="binding site" evidence="1">
    <location>
        <position position="26"/>
    </location>
    <ligand>
        <name>3-phosphoshikimate</name>
        <dbReference type="ChEBI" id="CHEBI:145989"/>
    </ligand>
</feature>
<feature type="binding site" evidence="1">
    <location>
        <position position="26"/>
    </location>
    <ligand>
        <name>phosphoenolpyruvate</name>
        <dbReference type="ChEBI" id="CHEBI:58702"/>
    </ligand>
</feature>
<feature type="binding site" evidence="1">
    <location>
        <position position="27"/>
    </location>
    <ligand>
        <name>3-phosphoshikimate</name>
        <dbReference type="ChEBI" id="CHEBI:145989"/>
    </ligand>
</feature>
<feature type="binding site" evidence="1">
    <location>
        <position position="31"/>
    </location>
    <ligand>
        <name>3-phosphoshikimate</name>
        <dbReference type="ChEBI" id="CHEBI:145989"/>
    </ligand>
</feature>
<feature type="binding site" evidence="1">
    <location>
        <position position="100"/>
    </location>
    <ligand>
        <name>phosphoenolpyruvate</name>
        <dbReference type="ChEBI" id="CHEBI:58702"/>
    </ligand>
</feature>
<feature type="binding site" evidence="1">
    <location>
        <position position="134"/>
    </location>
    <ligand>
        <name>phosphoenolpyruvate</name>
        <dbReference type="ChEBI" id="CHEBI:58702"/>
    </ligand>
</feature>
<feature type="binding site" evidence="1">
    <location>
        <position position="180"/>
    </location>
    <ligand>
        <name>3-phosphoshikimate</name>
        <dbReference type="ChEBI" id="CHEBI:145989"/>
    </ligand>
</feature>
<feature type="binding site" evidence="1">
    <location>
        <position position="181"/>
    </location>
    <ligand>
        <name>3-phosphoshikimate</name>
        <dbReference type="ChEBI" id="CHEBI:145989"/>
    </ligand>
</feature>
<feature type="binding site" evidence="1">
    <location>
        <position position="182"/>
    </location>
    <ligand>
        <name>3-phosphoshikimate</name>
        <dbReference type="ChEBI" id="CHEBI:145989"/>
    </ligand>
</feature>
<feature type="binding site" evidence="1">
    <location>
        <position position="182"/>
    </location>
    <ligand>
        <name>phosphoenolpyruvate</name>
        <dbReference type="ChEBI" id="CHEBI:58702"/>
    </ligand>
</feature>
<feature type="binding site" evidence="1">
    <location>
        <position position="208"/>
    </location>
    <ligand>
        <name>3-phosphoshikimate</name>
        <dbReference type="ChEBI" id="CHEBI:145989"/>
    </ligand>
</feature>
<feature type="binding site" evidence="1">
    <location>
        <position position="323"/>
    </location>
    <ligand>
        <name>3-phosphoshikimate</name>
        <dbReference type="ChEBI" id="CHEBI:145989"/>
    </ligand>
</feature>
<feature type="binding site" evidence="1">
    <location>
        <position position="346"/>
    </location>
    <ligand>
        <name>3-phosphoshikimate</name>
        <dbReference type="ChEBI" id="CHEBI:145989"/>
    </ligand>
</feature>
<feature type="binding site" evidence="1">
    <location>
        <position position="350"/>
    </location>
    <ligand>
        <name>3-phosphoshikimate</name>
        <dbReference type="ChEBI" id="CHEBI:145989"/>
    </ligand>
</feature>
<feature type="binding site" evidence="1">
    <location>
        <position position="354"/>
    </location>
    <ligand>
        <name>phosphoenolpyruvate</name>
        <dbReference type="ChEBI" id="CHEBI:58702"/>
    </ligand>
</feature>
<feature type="binding site" evidence="1">
    <location>
        <position position="398"/>
    </location>
    <ligand>
        <name>phosphoenolpyruvate</name>
        <dbReference type="ChEBI" id="CHEBI:58702"/>
    </ligand>
</feature>
<feature type="binding site" evidence="1">
    <location>
        <position position="423"/>
    </location>
    <ligand>
        <name>phosphoenolpyruvate</name>
        <dbReference type="ChEBI" id="CHEBI:58702"/>
    </ligand>
</feature>
<feature type="sequence conflict" description="In Ref. 1; CAA78480." evidence="2" ref="1">
    <original>K</original>
    <variation>R</variation>
    <location>
        <position position="117"/>
    </location>
</feature>
<feature type="sequence conflict" description="In Ref. 1; CAA78480." evidence="2" ref="1">
    <original>IETYN</original>
    <variation>LNIH</variation>
    <location>
        <begin position="391"/>
        <end position="395"/>
    </location>
</feature>
<feature type="sequence conflict" description="In Ref. 1; CAA78480." evidence="2" ref="1">
    <original>Q</original>
    <variation>K</variation>
    <location>
        <position position="410"/>
    </location>
</feature>
<feature type="sequence conflict" description="In Ref. 1; CAA78480." evidence="2" ref="1">
    <original>FDTFLRLTHAES</original>
    <variation>LILFTLNTREVA</variation>
    <location>
        <begin position="429"/>
        <end position="440"/>
    </location>
</feature>
<dbReference type="EC" id="2.5.1.19" evidence="1"/>
<dbReference type="EMBL" id="Z14100">
    <property type="protein sequence ID" value="CAA78480.1"/>
    <property type="molecule type" value="Genomic_DNA"/>
</dbReference>
<dbReference type="EMBL" id="AE004439">
    <property type="protein sequence ID" value="AAK02923.1"/>
    <property type="molecule type" value="Genomic_DNA"/>
</dbReference>
<dbReference type="PIR" id="S28063">
    <property type="entry name" value="S28063"/>
</dbReference>
<dbReference type="RefSeq" id="WP_010906873.1">
    <property type="nucleotide sequence ID" value="NC_002663.1"/>
</dbReference>
<dbReference type="SMR" id="Q04570"/>
<dbReference type="STRING" id="272843.PM0839"/>
<dbReference type="EnsemblBacteria" id="AAK02923">
    <property type="protein sequence ID" value="AAK02923"/>
    <property type="gene ID" value="PM0839"/>
</dbReference>
<dbReference type="KEGG" id="pmu:PM0839"/>
<dbReference type="PATRIC" id="fig|272843.6.peg.850"/>
<dbReference type="HOGENOM" id="CLU_024321_0_0_6"/>
<dbReference type="OrthoDB" id="9809920at2"/>
<dbReference type="UniPathway" id="UPA00053">
    <property type="reaction ID" value="UER00089"/>
</dbReference>
<dbReference type="Proteomes" id="UP000000809">
    <property type="component" value="Chromosome"/>
</dbReference>
<dbReference type="GO" id="GO:0005737">
    <property type="term" value="C:cytoplasm"/>
    <property type="evidence" value="ECO:0007669"/>
    <property type="project" value="UniProtKB-SubCell"/>
</dbReference>
<dbReference type="GO" id="GO:0003866">
    <property type="term" value="F:3-phosphoshikimate 1-carboxyvinyltransferase activity"/>
    <property type="evidence" value="ECO:0007669"/>
    <property type="project" value="UniProtKB-UniRule"/>
</dbReference>
<dbReference type="GO" id="GO:0008652">
    <property type="term" value="P:amino acid biosynthetic process"/>
    <property type="evidence" value="ECO:0007669"/>
    <property type="project" value="UniProtKB-KW"/>
</dbReference>
<dbReference type="GO" id="GO:0009073">
    <property type="term" value="P:aromatic amino acid family biosynthetic process"/>
    <property type="evidence" value="ECO:0007669"/>
    <property type="project" value="UniProtKB-KW"/>
</dbReference>
<dbReference type="GO" id="GO:0009423">
    <property type="term" value="P:chorismate biosynthetic process"/>
    <property type="evidence" value="ECO:0007669"/>
    <property type="project" value="UniProtKB-UniRule"/>
</dbReference>
<dbReference type="CDD" id="cd01556">
    <property type="entry name" value="EPSP_synthase"/>
    <property type="match status" value="1"/>
</dbReference>
<dbReference type="FunFam" id="3.65.10.10:FF:000003">
    <property type="entry name" value="3-phosphoshikimate 1-carboxyvinyltransferase"/>
    <property type="match status" value="1"/>
</dbReference>
<dbReference type="FunFam" id="3.65.10.10:FF:000004">
    <property type="entry name" value="3-phosphoshikimate 1-carboxyvinyltransferase"/>
    <property type="match status" value="1"/>
</dbReference>
<dbReference type="Gene3D" id="3.65.10.10">
    <property type="entry name" value="Enolpyruvate transferase domain"/>
    <property type="match status" value="2"/>
</dbReference>
<dbReference type="HAMAP" id="MF_00210">
    <property type="entry name" value="EPSP_synth"/>
    <property type="match status" value="1"/>
</dbReference>
<dbReference type="InterPro" id="IPR001986">
    <property type="entry name" value="Enolpyruvate_Tfrase_dom"/>
</dbReference>
<dbReference type="InterPro" id="IPR036968">
    <property type="entry name" value="Enolpyruvate_Tfrase_sf"/>
</dbReference>
<dbReference type="InterPro" id="IPR006264">
    <property type="entry name" value="EPSP_synthase"/>
</dbReference>
<dbReference type="InterPro" id="IPR023193">
    <property type="entry name" value="EPSP_synthase_CS"/>
</dbReference>
<dbReference type="InterPro" id="IPR013792">
    <property type="entry name" value="RNA3'P_cycl/enolpyr_Trfase_a/b"/>
</dbReference>
<dbReference type="NCBIfam" id="TIGR01356">
    <property type="entry name" value="aroA"/>
    <property type="match status" value="1"/>
</dbReference>
<dbReference type="PANTHER" id="PTHR21090">
    <property type="entry name" value="AROM/DEHYDROQUINATE SYNTHASE"/>
    <property type="match status" value="1"/>
</dbReference>
<dbReference type="PANTHER" id="PTHR21090:SF5">
    <property type="entry name" value="PENTAFUNCTIONAL AROM POLYPEPTIDE"/>
    <property type="match status" value="1"/>
</dbReference>
<dbReference type="Pfam" id="PF00275">
    <property type="entry name" value="EPSP_synthase"/>
    <property type="match status" value="1"/>
</dbReference>
<dbReference type="PIRSF" id="PIRSF000505">
    <property type="entry name" value="EPSPS"/>
    <property type="match status" value="1"/>
</dbReference>
<dbReference type="SUPFAM" id="SSF55205">
    <property type="entry name" value="EPT/RTPC-like"/>
    <property type="match status" value="1"/>
</dbReference>
<dbReference type="PROSITE" id="PS00104">
    <property type="entry name" value="EPSP_SYNTHASE_1"/>
    <property type="match status" value="1"/>
</dbReference>
<dbReference type="PROSITE" id="PS00885">
    <property type="entry name" value="EPSP_SYNTHASE_2"/>
    <property type="match status" value="1"/>
</dbReference>
<evidence type="ECO:0000255" key="1">
    <source>
        <dbReference type="HAMAP-Rule" id="MF_00210"/>
    </source>
</evidence>
<evidence type="ECO:0000305" key="2"/>
<reference key="1">
    <citation type="journal article" date="1992" name="Mol. Microbiol.">
        <title>Molecular analysis of the aroA gene of Pasteurella multocida and vaccine potential of a constructed aroA mutant.</title>
        <authorList>
            <person name="Homchampa P."/>
            <person name="Strugnell R.A."/>
            <person name="Adler B."/>
        </authorList>
    </citation>
    <scope>NUCLEOTIDE SEQUENCE [GENOMIC DNA]</scope>
    <source>
        <strain>PBA100</strain>
    </source>
</reference>
<reference key="2">
    <citation type="journal article" date="2001" name="Proc. Natl. Acad. Sci. U.S.A.">
        <title>Complete genomic sequence of Pasteurella multocida Pm70.</title>
        <authorList>
            <person name="May B.J."/>
            <person name="Zhang Q."/>
            <person name="Li L.L."/>
            <person name="Paustian M.L."/>
            <person name="Whittam T.S."/>
            <person name="Kapur V."/>
        </authorList>
    </citation>
    <scope>NUCLEOTIDE SEQUENCE [LARGE SCALE GENOMIC DNA]</scope>
    <source>
        <strain>Pm70</strain>
    </source>
</reference>
<proteinExistence type="inferred from homology"/>
<protein>
    <recommendedName>
        <fullName evidence="1">3-phosphoshikimate 1-carboxyvinyltransferase</fullName>
        <ecNumber evidence="1">2.5.1.19</ecNumber>
    </recommendedName>
    <alternativeName>
        <fullName evidence="1">5-enolpyruvylshikimate-3-phosphate synthase</fullName>
        <shortName evidence="1">EPSP synthase</shortName>
        <shortName evidence="1">EPSPS</shortName>
    </alternativeName>
</protein>
<accession>Q04570</accession>